<accession>P84829</accession>
<comment type="subcellular location">
    <subcellularLocation>
        <location evidence="1">Secreted</location>
    </subcellularLocation>
</comment>
<comment type="tissue specificity">
    <text evidence="1">Expressed by the skin glands.</text>
</comment>
<comment type="mass spectrometry" mass="1200.5" method="MALDI" evidence="1"/>
<name>SKSP4_ASCTR</name>
<dbReference type="GO" id="GO:0005576">
    <property type="term" value="C:extracellular region"/>
    <property type="evidence" value="ECO:0000314"/>
    <property type="project" value="UniProtKB"/>
</dbReference>
<evidence type="ECO:0000269" key="1">
    <source>
    </source>
</evidence>
<evidence type="ECO:0000305" key="2"/>
<keyword id="KW-0903">Direct protein sequencing</keyword>
<keyword id="KW-0964">Secreted</keyword>
<protein>
    <recommendedName>
        <fullName>Skin secreted peptide 4</fullName>
    </recommendedName>
</protein>
<sequence length="8" mass="1000">CHYIFNTC</sequence>
<proteinExistence type="evidence at protein level"/>
<feature type="peptide" id="PRO_0000233931" description="Skin secreted peptide 4" evidence="1">
    <location>
        <begin position="1"/>
        <end position="8"/>
    </location>
</feature>
<reference evidence="2" key="1">
    <citation type="journal article" date="2005" name="Gen. Comp. Endocrinol.">
        <title>Bradykinin-related peptides and tryptophyllins in the skin secretions of the most primitive extant frog, Ascaphus truei.</title>
        <authorList>
            <person name="Conlon J.M."/>
            <person name="Jouenne T."/>
            <person name="Cosette P."/>
            <person name="Cosquer D."/>
            <person name="Vaudry H."/>
            <person name="Taylor C.K."/>
            <person name="Abel P.W."/>
        </authorList>
    </citation>
    <scope>PROTEIN SEQUENCE</scope>
    <scope>SUBCELLULAR LOCATION</scope>
    <scope>TISSUE SPECIFICITY</scope>
    <scope>MASS SPECTROMETRY</scope>
    <source>
        <tissue evidence="1">Skin secretion</tissue>
    </source>
</reference>
<organism>
    <name type="scientific">Ascaphus truei</name>
    <name type="common">Coastal tailed frog</name>
    <dbReference type="NCBI Taxonomy" id="8439"/>
    <lineage>
        <taxon>Eukaryota</taxon>
        <taxon>Metazoa</taxon>
        <taxon>Chordata</taxon>
        <taxon>Craniata</taxon>
        <taxon>Vertebrata</taxon>
        <taxon>Euteleostomi</taxon>
        <taxon>Amphibia</taxon>
        <taxon>Batrachia</taxon>
        <taxon>Anura</taxon>
        <taxon>Ascaphidae</taxon>
        <taxon>Ascaphus</taxon>
    </lineage>
</organism>